<sequence length="280" mass="29436">MTPILAAEALTYAFPGGVKALDDLSLAVPQGESLAILGPNGAGKSTLLLHLNGTLRPQSGRVLLGGTATGHSRKDLTDWRRRVGLVLQDADDQLFAATVFEDVSFGPLNLGLSEAEARARVEEALAALSISDLRDRPTHMLSGGQKRRVAIAGAVAMRPEVLLLDEPTAGLDLAGTEQLLTLLHGLRAAGMTLVFSTHDVELAAALADRVALFRTGRVLAEGAAAAVLSDRATLAQGGLRPPLVIDLALSRARSRPFGPRSALPRTRDALAAQMAGWTRR</sequence>
<keyword id="KW-0002">3D-structure</keyword>
<keyword id="KW-0067">ATP-binding</keyword>
<keyword id="KW-0997">Cell inner membrane</keyword>
<keyword id="KW-1003">Cell membrane</keyword>
<keyword id="KW-0169">Cobalamin biosynthesis</keyword>
<keyword id="KW-0170">Cobalt</keyword>
<keyword id="KW-0171">Cobalt transport</keyword>
<keyword id="KW-0406">Ion transport</keyword>
<keyword id="KW-0472">Membrane</keyword>
<keyword id="KW-0547">Nucleotide-binding</keyword>
<keyword id="KW-1185">Reference proteome</keyword>
<keyword id="KW-1278">Translocase</keyword>
<keyword id="KW-0813">Transport</keyword>
<accession>O68106</accession>
<accession>D5AUZ6</accession>
<protein>
    <recommendedName>
        <fullName>Cobalt import ATP-binding protein CbiO</fullName>
        <ecNumber>7.2.2.-</ecNumber>
    </recommendedName>
    <alternativeName>
        <fullName>Energy-coupling factor transporter ATP-binding protein CbiO</fullName>
        <shortName>ECF transporter A component CbiO</shortName>
    </alternativeName>
</protein>
<evidence type="ECO:0000250" key="1"/>
<evidence type="ECO:0000255" key="2">
    <source>
        <dbReference type="PROSITE-ProRule" id="PRU00434"/>
    </source>
</evidence>
<evidence type="ECO:0000269" key="3">
    <source>
    </source>
</evidence>
<evidence type="ECO:0000269" key="4">
    <source>
    </source>
</evidence>
<evidence type="ECO:0000305" key="5"/>
<evidence type="ECO:0007829" key="6">
    <source>
        <dbReference type="PDB" id="5X3X"/>
    </source>
</evidence>
<evidence type="ECO:0007829" key="7">
    <source>
        <dbReference type="PDB" id="5X40"/>
    </source>
</evidence>
<feature type="chain" id="PRO_0000092057" description="Cobalt import ATP-binding protein CbiO">
    <location>
        <begin position="1"/>
        <end position="280"/>
    </location>
</feature>
<feature type="domain" description="ABC transporter" evidence="2">
    <location>
        <begin position="5"/>
        <end position="240"/>
    </location>
</feature>
<feature type="binding site" evidence="2">
    <location>
        <begin position="38"/>
        <end position="45"/>
    </location>
    <ligand>
        <name>ATP</name>
        <dbReference type="ChEBI" id="CHEBI:30616"/>
    </ligand>
</feature>
<feature type="strand" evidence="7">
    <location>
        <begin position="3"/>
        <end position="13"/>
    </location>
</feature>
<feature type="strand" evidence="7">
    <location>
        <begin position="19"/>
        <end position="28"/>
    </location>
</feature>
<feature type="strand" evidence="7">
    <location>
        <begin position="33"/>
        <end position="37"/>
    </location>
</feature>
<feature type="helix" evidence="7">
    <location>
        <begin position="44"/>
        <end position="51"/>
    </location>
</feature>
<feature type="strand" evidence="7">
    <location>
        <begin position="58"/>
        <end position="64"/>
    </location>
</feature>
<feature type="helix" evidence="7">
    <location>
        <begin position="73"/>
        <end position="82"/>
    </location>
</feature>
<feature type="strand" evidence="7">
    <location>
        <begin position="83"/>
        <end position="86"/>
    </location>
</feature>
<feature type="helix" evidence="7">
    <location>
        <begin position="90"/>
        <end position="92"/>
    </location>
</feature>
<feature type="strand" evidence="7">
    <location>
        <begin position="96"/>
        <end position="98"/>
    </location>
</feature>
<feature type="helix" evidence="7">
    <location>
        <begin position="99"/>
        <end position="109"/>
    </location>
</feature>
<feature type="helix" evidence="7">
    <location>
        <begin position="114"/>
        <end position="127"/>
    </location>
</feature>
<feature type="helix" evidence="7">
    <location>
        <begin position="131"/>
        <end position="133"/>
    </location>
</feature>
<feature type="helix" evidence="6">
    <location>
        <begin position="138"/>
        <end position="140"/>
    </location>
</feature>
<feature type="helix" evidence="7">
    <location>
        <begin position="143"/>
        <end position="155"/>
    </location>
</feature>
<feature type="strand" evidence="7">
    <location>
        <begin position="160"/>
        <end position="166"/>
    </location>
</feature>
<feature type="turn" evidence="7">
    <location>
        <begin position="167"/>
        <end position="170"/>
    </location>
</feature>
<feature type="helix" evidence="7">
    <location>
        <begin position="173"/>
        <end position="188"/>
    </location>
</feature>
<feature type="strand" evidence="7">
    <location>
        <begin position="192"/>
        <end position="196"/>
    </location>
</feature>
<feature type="helix" evidence="7">
    <location>
        <begin position="200"/>
        <end position="206"/>
    </location>
</feature>
<feature type="strand" evidence="7">
    <location>
        <begin position="208"/>
        <end position="214"/>
    </location>
</feature>
<feature type="strand" evidence="7">
    <location>
        <begin position="217"/>
        <end position="223"/>
    </location>
</feature>
<feature type="helix" evidence="7">
    <location>
        <begin position="224"/>
        <end position="229"/>
    </location>
</feature>
<feature type="helix" evidence="7">
    <location>
        <begin position="231"/>
        <end position="235"/>
    </location>
</feature>
<feature type="turn" evidence="7">
    <location>
        <begin position="236"/>
        <end position="238"/>
    </location>
</feature>
<feature type="helix" evidence="7">
    <location>
        <begin position="243"/>
        <end position="250"/>
    </location>
</feature>
<feature type="helix" evidence="7">
    <location>
        <begin position="252"/>
        <end position="254"/>
    </location>
</feature>
<feature type="helix" evidence="7">
    <location>
        <begin position="267"/>
        <end position="274"/>
    </location>
</feature>
<feature type="strand" evidence="7">
    <location>
        <begin position="277"/>
        <end position="279"/>
    </location>
</feature>
<gene>
    <name type="primary">cbiO</name>
    <name type="synonym">cbiO2</name>
    <name type="ordered locus">RCAP_rcc02034</name>
</gene>
<organism>
    <name type="scientific">Rhodobacter capsulatus (strain ATCC BAA-309 / NBRC 16581 / SB1003)</name>
    <dbReference type="NCBI Taxonomy" id="272942"/>
    <lineage>
        <taxon>Bacteria</taxon>
        <taxon>Pseudomonadati</taxon>
        <taxon>Pseudomonadota</taxon>
        <taxon>Alphaproteobacteria</taxon>
        <taxon>Rhodobacterales</taxon>
        <taxon>Rhodobacter group</taxon>
        <taxon>Rhodobacter</taxon>
    </lineage>
</organism>
<proteinExistence type="evidence at protein level"/>
<reference key="1">
    <citation type="journal article" date="1997" name="Proc. Natl. Acad. Sci. U.S.A.">
        <title>Sequence of a 189-kb segment of the chromosome of Rhodobacter capsulatus SB1003.</title>
        <authorList>
            <person name="Vlcek C."/>
            <person name="Paces V."/>
            <person name="Maltsev N."/>
            <person name="Paces J."/>
            <person name="Haselkorn R."/>
            <person name="Fonstein M."/>
        </authorList>
    </citation>
    <scope>NUCLEOTIDE SEQUENCE [GENOMIC DNA]</scope>
    <source>
        <strain>ATCC BAA-309 / NBRC 16581 / SB1003</strain>
    </source>
</reference>
<reference key="2">
    <citation type="journal article" date="2010" name="J. Bacteriol.">
        <title>Complete genome sequence of the photosynthetic purple nonsulfur bacterium Rhodobacter capsulatus SB 1003.</title>
        <authorList>
            <person name="Strnad H."/>
            <person name="Lapidus A."/>
            <person name="Paces J."/>
            <person name="Ulbrich P."/>
            <person name="Vlcek C."/>
            <person name="Paces V."/>
            <person name="Haselkorn R."/>
        </authorList>
    </citation>
    <scope>NUCLEOTIDE SEQUENCE [LARGE SCALE GENOMIC DNA]</scope>
    <source>
        <strain>ATCC BAA-309 / NBRC 16581 / SB1003</strain>
    </source>
</reference>
<reference key="3">
    <citation type="journal article" date="2006" name="J. Bacteriol.">
        <title>Comparative and functional genomic analysis of prokaryotic nickel and cobalt uptake transporters: evidence for a novel group of ATP-binding cassette transporters.</title>
        <authorList>
            <person name="Rodionov D.A."/>
            <person name="Hebbeln P."/>
            <person name="Gelfand M.S."/>
            <person name="Eitinger T."/>
        </authorList>
    </citation>
    <scope>FUNCTION IN COBALT TRANSPORT</scope>
    <scope>SUBSTRATES</scope>
    <scope>SUBUNIT</scope>
    <scope>EXPRESSION IN E.COLI</scope>
    <source>
        <strain>ATCC BAA-309 / NBRC 16581 / SB1003</strain>
    </source>
</reference>
<reference key="4">
    <citation type="journal article" date="2010" name="Res. Microbiol.">
        <title>A bipartite S unit of an ECF-type cobalt transporter.</title>
        <authorList>
            <person name="Siche S."/>
            <person name="Neubauer O."/>
            <person name="Hebbeln P."/>
            <person name="Eitinger T."/>
        </authorList>
    </citation>
    <scope>FUNCTION IN COBALT TRANSPORT</scope>
    <scope>SUBUNIT</scope>
    <scope>SUBCELLULAR LOCATION</scope>
    <source>
        <strain>ATCC BAA-309 / NBRC 16581 / SB1003</strain>
    </source>
</reference>
<dbReference type="EC" id="7.2.2.-"/>
<dbReference type="EMBL" id="AF010496">
    <property type="protein sequence ID" value="AAC16196.1"/>
    <property type="molecule type" value="Genomic_DNA"/>
</dbReference>
<dbReference type="EMBL" id="CP001312">
    <property type="protein sequence ID" value="ADE85778.1"/>
    <property type="molecule type" value="Genomic_DNA"/>
</dbReference>
<dbReference type="PIR" id="T03543">
    <property type="entry name" value="T03543"/>
</dbReference>
<dbReference type="RefSeq" id="WP_013067757.1">
    <property type="nucleotide sequence ID" value="NC_014034.1"/>
</dbReference>
<dbReference type="PDB" id="5X3X">
    <property type="method" value="X-ray"/>
    <property type="resolution" value="2.79 A"/>
    <property type="chains" value="A/B/a/b=1-280"/>
</dbReference>
<dbReference type="PDB" id="5X40">
    <property type="method" value="X-ray"/>
    <property type="resolution" value="1.45 A"/>
    <property type="chains" value="A/B=1-280"/>
</dbReference>
<dbReference type="PDBsum" id="5X3X"/>
<dbReference type="PDBsum" id="5X40"/>
<dbReference type="SMR" id="O68106"/>
<dbReference type="STRING" id="272942.RCAP_rcc02034"/>
<dbReference type="TCDB" id="3.A.1.23.8">
    <property type="family name" value="the atp-binding cassette (abc) superfamily"/>
</dbReference>
<dbReference type="GeneID" id="31490896"/>
<dbReference type="KEGG" id="rcp:RCAP_rcc02034"/>
<dbReference type="eggNOG" id="COG1122">
    <property type="taxonomic scope" value="Bacteria"/>
</dbReference>
<dbReference type="HOGENOM" id="CLU_000604_1_22_5"/>
<dbReference type="OrthoDB" id="9782163at2"/>
<dbReference type="UniPathway" id="UPA00148"/>
<dbReference type="Proteomes" id="UP000002361">
    <property type="component" value="Chromosome"/>
</dbReference>
<dbReference type="GO" id="GO:0043190">
    <property type="term" value="C:ATP-binding cassette (ABC) transporter complex"/>
    <property type="evidence" value="ECO:0000314"/>
    <property type="project" value="UniProtKB"/>
</dbReference>
<dbReference type="GO" id="GO:0005524">
    <property type="term" value="F:ATP binding"/>
    <property type="evidence" value="ECO:0007669"/>
    <property type="project" value="UniProtKB-KW"/>
</dbReference>
<dbReference type="GO" id="GO:0016887">
    <property type="term" value="F:ATP hydrolysis activity"/>
    <property type="evidence" value="ECO:0007669"/>
    <property type="project" value="InterPro"/>
</dbReference>
<dbReference type="GO" id="GO:0042626">
    <property type="term" value="F:ATPase-coupled transmembrane transporter activity"/>
    <property type="evidence" value="ECO:0007669"/>
    <property type="project" value="TreeGrafter"/>
</dbReference>
<dbReference type="GO" id="GO:0009236">
    <property type="term" value="P:cobalamin biosynthetic process"/>
    <property type="evidence" value="ECO:0007669"/>
    <property type="project" value="UniProtKB-UniPathway"/>
</dbReference>
<dbReference type="GO" id="GO:0006824">
    <property type="term" value="P:cobalt ion transport"/>
    <property type="evidence" value="ECO:0000314"/>
    <property type="project" value="UniProtKB"/>
</dbReference>
<dbReference type="CDD" id="cd03225">
    <property type="entry name" value="ABC_cobalt_CbiO_domain1"/>
    <property type="match status" value="1"/>
</dbReference>
<dbReference type="FunFam" id="3.40.50.300:FF:000224">
    <property type="entry name" value="Energy-coupling factor transporter ATP-binding protein EcfA"/>
    <property type="match status" value="1"/>
</dbReference>
<dbReference type="Gene3D" id="3.40.50.300">
    <property type="entry name" value="P-loop containing nucleotide triphosphate hydrolases"/>
    <property type="match status" value="1"/>
</dbReference>
<dbReference type="InterPro" id="IPR003593">
    <property type="entry name" value="AAA+_ATPase"/>
</dbReference>
<dbReference type="InterPro" id="IPR003439">
    <property type="entry name" value="ABC_transporter-like_ATP-bd"/>
</dbReference>
<dbReference type="InterPro" id="IPR017871">
    <property type="entry name" value="ABC_transporter-like_CS"/>
</dbReference>
<dbReference type="InterPro" id="IPR015856">
    <property type="entry name" value="ABC_transpr_CbiO/EcfA_su"/>
</dbReference>
<dbReference type="InterPro" id="IPR005876">
    <property type="entry name" value="Co_trans_ATP-bd"/>
</dbReference>
<dbReference type="InterPro" id="IPR050095">
    <property type="entry name" value="ECF_ABC_transporter_ATP-bd"/>
</dbReference>
<dbReference type="InterPro" id="IPR027417">
    <property type="entry name" value="P-loop_NTPase"/>
</dbReference>
<dbReference type="NCBIfam" id="TIGR01166">
    <property type="entry name" value="cbiO"/>
    <property type="match status" value="1"/>
</dbReference>
<dbReference type="PANTHER" id="PTHR43553:SF24">
    <property type="entry name" value="ENERGY-COUPLING FACTOR TRANSPORTER ATP-BINDING PROTEIN ECFA1"/>
    <property type="match status" value="1"/>
</dbReference>
<dbReference type="PANTHER" id="PTHR43553">
    <property type="entry name" value="HEAVY METAL TRANSPORTER"/>
    <property type="match status" value="1"/>
</dbReference>
<dbReference type="Pfam" id="PF00005">
    <property type="entry name" value="ABC_tran"/>
    <property type="match status" value="1"/>
</dbReference>
<dbReference type="SMART" id="SM00382">
    <property type="entry name" value="AAA"/>
    <property type="match status" value="1"/>
</dbReference>
<dbReference type="SUPFAM" id="SSF52540">
    <property type="entry name" value="P-loop containing nucleoside triphosphate hydrolases"/>
    <property type="match status" value="1"/>
</dbReference>
<dbReference type="PROSITE" id="PS00211">
    <property type="entry name" value="ABC_TRANSPORTER_1"/>
    <property type="match status" value="1"/>
</dbReference>
<dbReference type="PROSITE" id="PS50893">
    <property type="entry name" value="ABC_TRANSPORTER_2"/>
    <property type="match status" value="1"/>
</dbReference>
<name>CBIO_RHOCB</name>
<comment type="function">
    <text evidence="3 4">Part of the energy-coupling factor (ECF) transporter complex CbiMNOQ involved in cobalt import. The complex confers cobalt uptake upon expression in E.coli; can also transport nickel with a very low affinity. Presumably responsible for energy coupling to the transport system.</text>
</comment>
<comment type="pathway">
    <text>Cofactor biosynthesis; adenosylcobalamin biosynthesis.</text>
</comment>
<comment type="subunit">
    <text evidence="3 4">Forms an energy-coupling factor (ECF) transporter complex composed of an ATP-binding protein (A component, CbiO), a transmembrane protein (T component, CbiQ) and 2 possible substrate-capture proteins (S components, CbiM and CbiN) of unknown stoichimetry. Subcomplexes composed of CbiMQO can be isolated from membranes but the CbiN subunit is not isolated in association with them, suggesting it is only loosely associated. Expression of just CbiMN in E.coli confers some cobalt uptake.</text>
</comment>
<comment type="subcellular location">
    <subcellularLocation>
        <location evidence="1">Cell inner membrane</location>
        <topology evidence="1">Peripheral membrane protein</topology>
    </subcellularLocation>
</comment>
<comment type="similarity">
    <text evidence="5">Belongs to the ABC transporter superfamily.</text>
</comment>